<accession>Q9C7R6</accession>
<accession>Q8VZK7</accession>
<proteinExistence type="evidence at transcript level"/>
<comment type="function">
    <text evidence="1">Functions as an E3 ubiquitin ligase.</text>
</comment>
<comment type="catalytic activity">
    <reaction>
        <text>S-ubiquitinyl-[E2 ubiquitin-conjugating enzyme]-L-cysteine + [acceptor protein]-L-lysine = [E2 ubiquitin-conjugating enzyme]-L-cysteine + N(6)-ubiquitinyl-[acceptor protein]-L-lysine.</text>
        <dbReference type="EC" id="2.3.2.27"/>
    </reaction>
</comment>
<comment type="pathway">
    <text>Protein modification; protein ubiquitination.</text>
</comment>
<name>PUB17_ARATH</name>
<protein>
    <recommendedName>
        <fullName>U-box domain-containing protein 17</fullName>
        <ecNumber>2.3.2.27</ecNumber>
    </recommendedName>
    <alternativeName>
        <fullName>Plant U-box protein 17</fullName>
    </alternativeName>
    <alternativeName>
        <fullName evidence="2">RING-type E3 ubiquitin transferase PUB17</fullName>
    </alternativeName>
</protein>
<dbReference type="EC" id="2.3.2.27"/>
<dbReference type="EMBL" id="AC068667">
    <property type="protein sequence ID" value="AAG51726.1"/>
    <property type="molecule type" value="Genomic_DNA"/>
</dbReference>
<dbReference type="EMBL" id="CP002684">
    <property type="protein sequence ID" value="AEE31074.1"/>
    <property type="molecule type" value="Genomic_DNA"/>
</dbReference>
<dbReference type="EMBL" id="AY064045">
    <property type="protein sequence ID" value="AAL36401.1"/>
    <property type="molecule type" value="mRNA"/>
</dbReference>
<dbReference type="EMBL" id="AY150512">
    <property type="protein sequence ID" value="AAN13028.1"/>
    <property type="molecule type" value="mRNA"/>
</dbReference>
<dbReference type="PIR" id="A86416">
    <property type="entry name" value="A86416"/>
</dbReference>
<dbReference type="RefSeq" id="NP_174228.1">
    <property type="nucleotide sequence ID" value="NM_102674.4"/>
</dbReference>
<dbReference type="SMR" id="Q9C7R6"/>
<dbReference type="FunCoup" id="Q9C7R6">
    <property type="interactions" value="1543"/>
</dbReference>
<dbReference type="IntAct" id="Q9C7R6">
    <property type="interactions" value="1"/>
</dbReference>
<dbReference type="STRING" id="3702.Q9C7R6"/>
<dbReference type="PaxDb" id="3702-AT1G29340.1"/>
<dbReference type="ProteomicsDB" id="224849"/>
<dbReference type="EnsemblPlants" id="AT1G29340.1">
    <property type="protein sequence ID" value="AT1G29340.1"/>
    <property type="gene ID" value="AT1G29340"/>
</dbReference>
<dbReference type="GeneID" id="839808"/>
<dbReference type="Gramene" id="AT1G29340.1">
    <property type="protein sequence ID" value="AT1G29340.1"/>
    <property type="gene ID" value="AT1G29340"/>
</dbReference>
<dbReference type="KEGG" id="ath:AT1G29340"/>
<dbReference type="Araport" id="AT1G29340"/>
<dbReference type="TAIR" id="AT1G29340">
    <property type="gene designation" value="PUB17"/>
</dbReference>
<dbReference type="eggNOG" id="KOG0167">
    <property type="taxonomic scope" value="Eukaryota"/>
</dbReference>
<dbReference type="HOGENOM" id="CLU_006348_5_2_1"/>
<dbReference type="InParanoid" id="Q9C7R6"/>
<dbReference type="OMA" id="THTDNCV"/>
<dbReference type="PhylomeDB" id="Q9C7R6"/>
<dbReference type="BRENDA" id="2.3.2.27">
    <property type="organism ID" value="399"/>
</dbReference>
<dbReference type="UniPathway" id="UPA00143"/>
<dbReference type="PRO" id="PR:Q9C7R6"/>
<dbReference type="Proteomes" id="UP000006548">
    <property type="component" value="Chromosome 1"/>
</dbReference>
<dbReference type="ExpressionAtlas" id="Q9C7R6">
    <property type="expression patterns" value="baseline and differential"/>
</dbReference>
<dbReference type="GO" id="GO:0004842">
    <property type="term" value="F:ubiquitin-protein transferase activity"/>
    <property type="evidence" value="ECO:0000314"/>
    <property type="project" value="TAIR"/>
</dbReference>
<dbReference type="GO" id="GO:0098542">
    <property type="term" value="P:defense response to other organism"/>
    <property type="evidence" value="ECO:0000315"/>
    <property type="project" value="TAIR"/>
</dbReference>
<dbReference type="GO" id="GO:0016567">
    <property type="term" value="P:protein ubiquitination"/>
    <property type="evidence" value="ECO:0000314"/>
    <property type="project" value="TAIR"/>
</dbReference>
<dbReference type="CDD" id="cd16664">
    <property type="entry name" value="RING-Ubox_PUB"/>
    <property type="match status" value="1"/>
</dbReference>
<dbReference type="FunFam" id="1.25.10.10:FF:000423">
    <property type="entry name" value="RING-type E3 ubiquitin transferase"/>
    <property type="match status" value="1"/>
</dbReference>
<dbReference type="FunFam" id="3.30.40.10:FF:000455">
    <property type="entry name" value="RING-type E3 ubiquitin transferase"/>
    <property type="match status" value="1"/>
</dbReference>
<dbReference type="Gene3D" id="1.25.10.10">
    <property type="entry name" value="Leucine-rich Repeat Variant"/>
    <property type="match status" value="1"/>
</dbReference>
<dbReference type="Gene3D" id="3.30.40.10">
    <property type="entry name" value="Zinc/RING finger domain, C3HC4 (zinc finger)"/>
    <property type="match status" value="1"/>
</dbReference>
<dbReference type="InterPro" id="IPR011989">
    <property type="entry name" value="ARM-like"/>
</dbReference>
<dbReference type="InterPro" id="IPR016024">
    <property type="entry name" value="ARM-type_fold"/>
</dbReference>
<dbReference type="InterPro" id="IPR000225">
    <property type="entry name" value="Armadillo"/>
</dbReference>
<dbReference type="InterPro" id="IPR045210">
    <property type="entry name" value="RING-Ubox_PUB"/>
</dbReference>
<dbReference type="InterPro" id="IPR003613">
    <property type="entry name" value="Ubox_domain"/>
</dbReference>
<dbReference type="InterPro" id="IPR013083">
    <property type="entry name" value="Znf_RING/FYVE/PHD"/>
</dbReference>
<dbReference type="PANTHER" id="PTHR23315">
    <property type="entry name" value="U BOX DOMAIN-CONTAINING"/>
    <property type="match status" value="1"/>
</dbReference>
<dbReference type="PANTHER" id="PTHR23315:SF266">
    <property type="entry name" value="U-BOX DOMAIN-CONTAINING PROTEIN 17"/>
    <property type="match status" value="1"/>
</dbReference>
<dbReference type="Pfam" id="PF00514">
    <property type="entry name" value="Arm"/>
    <property type="match status" value="1"/>
</dbReference>
<dbReference type="Pfam" id="PF25368">
    <property type="entry name" value="PUB10_N"/>
    <property type="match status" value="1"/>
</dbReference>
<dbReference type="Pfam" id="PF04564">
    <property type="entry name" value="U-box"/>
    <property type="match status" value="1"/>
</dbReference>
<dbReference type="SMART" id="SM00185">
    <property type="entry name" value="ARM"/>
    <property type="match status" value="5"/>
</dbReference>
<dbReference type="SMART" id="SM00504">
    <property type="entry name" value="Ubox"/>
    <property type="match status" value="1"/>
</dbReference>
<dbReference type="SUPFAM" id="SSF48371">
    <property type="entry name" value="ARM repeat"/>
    <property type="match status" value="1"/>
</dbReference>
<dbReference type="SUPFAM" id="SSF57850">
    <property type="entry name" value="RING/U-box"/>
    <property type="match status" value="1"/>
</dbReference>
<dbReference type="PROSITE" id="PS50176">
    <property type="entry name" value="ARM_REPEAT"/>
    <property type="match status" value="1"/>
</dbReference>
<dbReference type="PROSITE" id="PS51698">
    <property type="entry name" value="U_BOX"/>
    <property type="match status" value="1"/>
</dbReference>
<gene>
    <name type="primary">PUB17</name>
    <name type="ordered locus">At1g29340</name>
    <name type="ORF">F15D2.34</name>
</gene>
<keyword id="KW-1185">Reference proteome</keyword>
<keyword id="KW-0677">Repeat</keyword>
<keyword id="KW-0808">Transferase</keyword>
<keyword id="KW-0833">Ubl conjugation pathway</keyword>
<evidence type="ECO:0000269" key="1">
    <source>
    </source>
</evidence>
<evidence type="ECO:0000305" key="2"/>
<organism>
    <name type="scientific">Arabidopsis thaliana</name>
    <name type="common">Mouse-ear cress</name>
    <dbReference type="NCBI Taxonomy" id="3702"/>
    <lineage>
        <taxon>Eukaryota</taxon>
        <taxon>Viridiplantae</taxon>
        <taxon>Streptophyta</taxon>
        <taxon>Embryophyta</taxon>
        <taxon>Tracheophyta</taxon>
        <taxon>Spermatophyta</taxon>
        <taxon>Magnoliopsida</taxon>
        <taxon>eudicotyledons</taxon>
        <taxon>Gunneridae</taxon>
        <taxon>Pentapetalae</taxon>
        <taxon>rosids</taxon>
        <taxon>malvids</taxon>
        <taxon>Brassicales</taxon>
        <taxon>Brassicaceae</taxon>
        <taxon>Camelineae</taxon>
        <taxon>Arabidopsis</taxon>
    </lineage>
</organism>
<sequence>MASAAIFSSLRRRRSPSLEAFLAPVDLSGVALVQTLASISSEVVSCFTSVRFSFQRKNARSLIRKIEIFVVLFEFLVDSNWGSTTTRTRARRRSKSSVSESTALLCLKELYLLLYRSKILVDYCAQSSKLWLLLQNPSISGYFHDLNQEISTLLDVLPVNDLGLSDDIREQIELLQRQSRKARLYIDKNDESLRESFYSFLDGFENGKIPSSVDLRMFFVEKLGIRDSKSCRSEIEFLEEQIVNHDGDLEPTGSVINGFVAITRYCRFLLFGFEEDGMEWWIENNPKKPRKGFVAQEIGDTFITVPKDFVCPISLDLMTDPVIISTGQTYDRNSIARWIEEGHCTCPKTGQMLMDSRIVPNRALKNLIVQWCTASGISYESEFTDSPNESFASALPTKAAVEANKATVSILIKYLADGSQAAQTVAAREIRLLAKTGKENRAYIAEAGAIPHLCRLLTSENAIAQENSVTAMLNLSIYEKNKSRIMEEGDCLESIVSVLVSGLTVEAQENAAATLFSLSAVHEYKKRIAIVDQCVEALALLLQNGTPRGKKDAVTALYNLSTHPDNCSRMIEGGGVSSLVGALKNEGVAEEAAGALALLVRQSLGAEAIGKEDSAVAGLMGMMRCGTPRGKENAVAALLELCRSGGAAVAEKVLRAPAIAGLLQTLLFTGTKRARRKAASLARVFQRRENAAMRSGVYGFVGNTNGNRDGGFTTDVSVPISISISVPVL</sequence>
<reference key="1">
    <citation type="journal article" date="2000" name="Nature">
        <title>Sequence and analysis of chromosome 1 of the plant Arabidopsis thaliana.</title>
        <authorList>
            <person name="Theologis A."/>
            <person name="Ecker J.R."/>
            <person name="Palm C.J."/>
            <person name="Federspiel N.A."/>
            <person name="Kaul S."/>
            <person name="White O."/>
            <person name="Alonso J."/>
            <person name="Altafi H."/>
            <person name="Araujo R."/>
            <person name="Bowman C.L."/>
            <person name="Brooks S.Y."/>
            <person name="Buehler E."/>
            <person name="Chan A."/>
            <person name="Chao Q."/>
            <person name="Chen H."/>
            <person name="Cheuk R.F."/>
            <person name="Chin C.W."/>
            <person name="Chung M.K."/>
            <person name="Conn L."/>
            <person name="Conway A.B."/>
            <person name="Conway A.R."/>
            <person name="Creasy T.H."/>
            <person name="Dewar K."/>
            <person name="Dunn P."/>
            <person name="Etgu P."/>
            <person name="Feldblyum T.V."/>
            <person name="Feng J.-D."/>
            <person name="Fong B."/>
            <person name="Fujii C.Y."/>
            <person name="Gill J.E."/>
            <person name="Goldsmith A.D."/>
            <person name="Haas B."/>
            <person name="Hansen N.F."/>
            <person name="Hughes B."/>
            <person name="Huizar L."/>
            <person name="Hunter J.L."/>
            <person name="Jenkins J."/>
            <person name="Johnson-Hopson C."/>
            <person name="Khan S."/>
            <person name="Khaykin E."/>
            <person name="Kim C.J."/>
            <person name="Koo H.L."/>
            <person name="Kremenetskaia I."/>
            <person name="Kurtz D.B."/>
            <person name="Kwan A."/>
            <person name="Lam B."/>
            <person name="Langin-Hooper S."/>
            <person name="Lee A."/>
            <person name="Lee J.M."/>
            <person name="Lenz C.A."/>
            <person name="Li J.H."/>
            <person name="Li Y.-P."/>
            <person name="Lin X."/>
            <person name="Liu S.X."/>
            <person name="Liu Z.A."/>
            <person name="Luros J.S."/>
            <person name="Maiti R."/>
            <person name="Marziali A."/>
            <person name="Militscher J."/>
            <person name="Miranda M."/>
            <person name="Nguyen M."/>
            <person name="Nierman W.C."/>
            <person name="Osborne B.I."/>
            <person name="Pai G."/>
            <person name="Peterson J."/>
            <person name="Pham P.K."/>
            <person name="Rizzo M."/>
            <person name="Rooney T."/>
            <person name="Rowley D."/>
            <person name="Sakano H."/>
            <person name="Salzberg S.L."/>
            <person name="Schwartz J.R."/>
            <person name="Shinn P."/>
            <person name="Southwick A.M."/>
            <person name="Sun H."/>
            <person name="Tallon L.J."/>
            <person name="Tambunga G."/>
            <person name="Toriumi M.J."/>
            <person name="Town C.D."/>
            <person name="Utterback T."/>
            <person name="Van Aken S."/>
            <person name="Vaysberg M."/>
            <person name="Vysotskaia V.S."/>
            <person name="Walker M."/>
            <person name="Wu D."/>
            <person name="Yu G."/>
            <person name="Fraser C.M."/>
            <person name="Venter J.C."/>
            <person name="Davis R.W."/>
        </authorList>
    </citation>
    <scope>NUCLEOTIDE SEQUENCE [LARGE SCALE GENOMIC DNA]</scope>
    <source>
        <strain>cv. Columbia</strain>
    </source>
</reference>
<reference key="2">
    <citation type="journal article" date="2017" name="Plant J.">
        <title>Araport11: a complete reannotation of the Arabidopsis thaliana reference genome.</title>
        <authorList>
            <person name="Cheng C.Y."/>
            <person name="Krishnakumar V."/>
            <person name="Chan A.P."/>
            <person name="Thibaud-Nissen F."/>
            <person name="Schobel S."/>
            <person name="Town C.D."/>
        </authorList>
    </citation>
    <scope>GENOME REANNOTATION</scope>
    <source>
        <strain>cv. Columbia</strain>
    </source>
</reference>
<reference key="3">
    <citation type="journal article" date="2003" name="Science">
        <title>Empirical analysis of transcriptional activity in the Arabidopsis genome.</title>
        <authorList>
            <person name="Yamada K."/>
            <person name="Lim J."/>
            <person name="Dale J.M."/>
            <person name="Chen H."/>
            <person name="Shinn P."/>
            <person name="Palm C.J."/>
            <person name="Southwick A.M."/>
            <person name="Wu H.C."/>
            <person name="Kim C.J."/>
            <person name="Nguyen M."/>
            <person name="Pham P.K."/>
            <person name="Cheuk R.F."/>
            <person name="Karlin-Newmann G."/>
            <person name="Liu S.X."/>
            <person name="Lam B."/>
            <person name="Sakano H."/>
            <person name="Wu T."/>
            <person name="Yu G."/>
            <person name="Miranda M."/>
            <person name="Quach H.L."/>
            <person name="Tripp M."/>
            <person name="Chang C.H."/>
            <person name="Lee J.M."/>
            <person name="Toriumi M.J."/>
            <person name="Chan M.M."/>
            <person name="Tang C.C."/>
            <person name="Onodera C.S."/>
            <person name="Deng J.M."/>
            <person name="Akiyama K."/>
            <person name="Ansari Y."/>
            <person name="Arakawa T."/>
            <person name="Banh J."/>
            <person name="Banno F."/>
            <person name="Bowser L."/>
            <person name="Brooks S.Y."/>
            <person name="Carninci P."/>
            <person name="Chao Q."/>
            <person name="Choy N."/>
            <person name="Enju A."/>
            <person name="Goldsmith A.D."/>
            <person name="Gurjal M."/>
            <person name="Hansen N.F."/>
            <person name="Hayashizaki Y."/>
            <person name="Johnson-Hopson C."/>
            <person name="Hsuan V.W."/>
            <person name="Iida K."/>
            <person name="Karnes M."/>
            <person name="Khan S."/>
            <person name="Koesema E."/>
            <person name="Ishida J."/>
            <person name="Jiang P.X."/>
            <person name="Jones T."/>
            <person name="Kawai J."/>
            <person name="Kamiya A."/>
            <person name="Meyers C."/>
            <person name="Nakajima M."/>
            <person name="Narusaka M."/>
            <person name="Seki M."/>
            <person name="Sakurai T."/>
            <person name="Satou M."/>
            <person name="Tamse R."/>
            <person name="Vaysberg M."/>
            <person name="Wallender E.K."/>
            <person name="Wong C."/>
            <person name="Yamamura Y."/>
            <person name="Yuan S."/>
            <person name="Shinozaki K."/>
            <person name="Davis R.W."/>
            <person name="Theologis A."/>
            <person name="Ecker J.R."/>
        </authorList>
    </citation>
    <scope>NUCLEOTIDE SEQUENCE [LARGE SCALE MRNA]</scope>
    <source>
        <strain>cv. Columbia</strain>
    </source>
</reference>
<reference key="4">
    <citation type="journal article" date="2001" name="Trends Plant Sci.">
        <title>The U-box protein family in plants.</title>
        <authorList>
            <person name="Azevedo C."/>
            <person name="Santos-Rosa M.J."/>
            <person name="Shirasu K."/>
        </authorList>
    </citation>
    <scope>GENE FAMILY ORGANIZATION</scope>
    <scope>NOMENCLATURE</scope>
</reference>
<reference key="5">
    <citation type="journal article" date="2004" name="Plant Physiol.">
        <title>A large complement of the predicted Arabidopsis ARM repeat proteins are members of the U-box E3 ubiquitin ligase family.</title>
        <authorList>
            <person name="Mudgil Y."/>
            <person name="Shiu S.-H."/>
            <person name="Stone S.L."/>
            <person name="Salt J.N."/>
            <person name="Goring D.R."/>
        </authorList>
    </citation>
    <scope>GENE FAMILY ORGANIZATION</scope>
</reference>
<reference key="6">
    <citation type="journal article" date="2006" name="Plant Cell">
        <title>The E3 ubiquitin ligase activity of arabidopsis PLANT U-BOX17 and its functional tobacco homolog ACRE276 are required for cell death and defense.</title>
        <authorList>
            <person name="Yang C.-W."/>
            <person name="Gonzalez-Lamothe R."/>
            <person name="Ewan R.A."/>
            <person name="Rowland O."/>
            <person name="Yoshioka H."/>
            <person name="Shenton M."/>
            <person name="Ye H."/>
            <person name="O'Donnell E."/>
            <person name="Jones J.D.G."/>
            <person name="Sadanandom A."/>
        </authorList>
    </citation>
    <scope>FUNCTION</scope>
</reference>
<feature type="chain" id="PRO_0000322161" description="U-box domain-containing protein 17">
    <location>
        <begin position="1"/>
        <end position="729"/>
    </location>
</feature>
<feature type="domain" description="U-box">
    <location>
        <begin position="304"/>
        <end position="378"/>
    </location>
</feature>
<feature type="repeat" description="ARM 1">
    <location>
        <begin position="438"/>
        <end position="477"/>
    </location>
</feature>
<feature type="repeat" description="ARM 2">
    <location>
        <begin position="479"/>
        <end position="520"/>
    </location>
</feature>
<feature type="repeat" description="ARM 3">
    <location>
        <begin position="523"/>
        <end position="562"/>
    </location>
</feature>
<feature type="repeat" description="ARM 4">
    <location>
        <begin position="564"/>
        <end position="601"/>
    </location>
</feature>
<feature type="sequence conflict" description="In Ref. 3; AAL36401." evidence="2" ref="3">
    <original>I</original>
    <variation>T</variation>
    <location>
        <position position="571"/>
    </location>
</feature>